<feature type="chain" id="PRO_0000046373" description="Phospholipid-transporting ATPase IG">
    <location>
        <begin position="1"/>
        <end position="1132"/>
    </location>
</feature>
<feature type="topological domain" description="Cytoplasmic" evidence="4">
    <location>
        <begin position="1"/>
        <end position="66"/>
    </location>
</feature>
<feature type="transmembrane region" description="Helical" evidence="4">
    <location>
        <begin position="67"/>
        <end position="85"/>
    </location>
</feature>
<feature type="topological domain" description="Extracellular" evidence="4">
    <location>
        <position position="86"/>
    </location>
</feature>
<feature type="transmembrane region" description="Helical" evidence="4">
    <location>
        <begin position="87"/>
        <end position="107"/>
    </location>
</feature>
<feature type="topological domain" description="Cytoplasmic" evidence="4">
    <location>
        <begin position="108"/>
        <end position="290"/>
    </location>
</feature>
<feature type="transmembrane region" description="Helical" evidence="4">
    <location>
        <begin position="291"/>
        <end position="311"/>
    </location>
</feature>
<feature type="topological domain" description="Extracellular" evidence="4">
    <location>
        <begin position="312"/>
        <end position="346"/>
    </location>
</feature>
<feature type="transmembrane region" description="Helical" evidence="4">
    <location>
        <begin position="347"/>
        <end position="367"/>
    </location>
</feature>
<feature type="topological domain" description="Cytoplasmic" evidence="4">
    <location>
        <begin position="368"/>
        <end position="879"/>
    </location>
</feature>
<feature type="transmembrane region" description="Helical" evidence="4">
    <location>
        <begin position="880"/>
        <end position="900"/>
    </location>
</feature>
<feature type="topological domain" description="Extracellular" evidence="4">
    <location>
        <begin position="901"/>
        <end position="908"/>
    </location>
</feature>
<feature type="transmembrane region" description="Helical" evidence="4">
    <location>
        <begin position="909"/>
        <end position="929"/>
    </location>
</feature>
<feature type="topological domain" description="Cytoplasmic" evidence="4">
    <location>
        <begin position="930"/>
        <end position="955"/>
    </location>
</feature>
<feature type="transmembrane region" description="Helical" evidence="4">
    <location>
        <begin position="956"/>
        <end position="976"/>
    </location>
</feature>
<feature type="topological domain" description="Extracellular" evidence="4">
    <location>
        <begin position="977"/>
        <end position="995"/>
    </location>
</feature>
<feature type="transmembrane region" description="Helical" evidence="4">
    <location>
        <begin position="996"/>
        <end position="1016"/>
    </location>
</feature>
<feature type="topological domain" description="Cytoplasmic" evidence="4">
    <location>
        <begin position="1017"/>
        <end position="1026"/>
    </location>
</feature>
<feature type="transmembrane region" description="Helical" evidence="4">
    <location>
        <begin position="1027"/>
        <end position="1047"/>
    </location>
</feature>
<feature type="topological domain" description="Extracellular" evidence="4">
    <location>
        <begin position="1048"/>
        <end position="1069"/>
    </location>
</feature>
<feature type="transmembrane region" description="Helical" evidence="4">
    <location>
        <begin position="1070"/>
        <end position="1090"/>
    </location>
</feature>
<feature type="topological domain" description="Cytoplasmic" evidence="4">
    <location>
        <begin position="1091"/>
        <end position="1132"/>
    </location>
</feature>
<feature type="short sequence motif" description="Di-leucine motif" evidence="12">
    <location>
        <begin position="1116"/>
        <end position="1121"/>
    </location>
</feature>
<feature type="active site" description="4-aspartylphosphate intermediate" evidence="3">
    <location>
        <position position="412"/>
    </location>
</feature>
<feature type="binding site" evidence="3">
    <location>
        <position position="412"/>
    </location>
    <ligand>
        <name>ATP</name>
        <dbReference type="ChEBI" id="CHEBI:30616"/>
    </ligand>
</feature>
<feature type="binding site" evidence="3">
    <location>
        <position position="412"/>
    </location>
    <ligand>
        <name>Mg(2+)</name>
        <dbReference type="ChEBI" id="CHEBI:18420"/>
    </ligand>
</feature>
<feature type="binding site" evidence="3">
    <location>
        <position position="413"/>
    </location>
    <ligand>
        <name>ATP</name>
        <dbReference type="ChEBI" id="CHEBI:30616"/>
    </ligand>
</feature>
<feature type="binding site" evidence="3">
    <location>
        <position position="414"/>
    </location>
    <ligand>
        <name>ATP</name>
        <dbReference type="ChEBI" id="CHEBI:30616"/>
    </ligand>
</feature>
<feature type="binding site" evidence="3">
    <location>
        <position position="414"/>
    </location>
    <ligand>
        <name>Mg(2+)</name>
        <dbReference type="ChEBI" id="CHEBI:18420"/>
    </ligand>
</feature>
<feature type="binding site" evidence="1">
    <location>
        <position position="501"/>
    </location>
    <ligand>
        <name>ATP</name>
        <dbReference type="ChEBI" id="CHEBI:30616"/>
    </ligand>
</feature>
<feature type="binding site" evidence="3">
    <location>
        <position position="543"/>
    </location>
    <ligand>
        <name>ATP</name>
        <dbReference type="ChEBI" id="CHEBI:30616"/>
    </ligand>
</feature>
<feature type="binding site" evidence="1">
    <location>
        <position position="566"/>
    </location>
    <ligand>
        <name>ATP</name>
        <dbReference type="ChEBI" id="CHEBI:30616"/>
    </ligand>
</feature>
<feature type="binding site" evidence="1">
    <location>
        <position position="597"/>
    </location>
    <ligand>
        <name>ATP</name>
        <dbReference type="ChEBI" id="CHEBI:30616"/>
    </ligand>
</feature>
<feature type="binding site" evidence="1">
    <location>
        <position position="677"/>
    </location>
    <ligand>
        <name>ATP</name>
        <dbReference type="ChEBI" id="CHEBI:30616"/>
    </ligand>
</feature>
<feature type="binding site" evidence="1">
    <location>
        <position position="678"/>
    </location>
    <ligand>
        <name>ATP</name>
        <dbReference type="ChEBI" id="CHEBI:30616"/>
    </ligand>
</feature>
<feature type="binding site" evidence="1">
    <location>
        <position position="679"/>
    </location>
    <ligand>
        <name>ATP</name>
        <dbReference type="ChEBI" id="CHEBI:30616"/>
    </ligand>
</feature>
<feature type="binding site" evidence="1">
    <location>
        <position position="792"/>
    </location>
    <ligand>
        <name>ATP</name>
        <dbReference type="ChEBI" id="CHEBI:30616"/>
    </ligand>
</feature>
<feature type="binding site" evidence="1">
    <location>
        <position position="798"/>
    </location>
    <ligand>
        <name>ATP</name>
        <dbReference type="ChEBI" id="CHEBI:30616"/>
    </ligand>
</feature>
<feature type="binding site" evidence="13 22">
    <location>
        <position position="819"/>
    </location>
    <ligand>
        <name>Mg(2+)</name>
        <dbReference type="ChEBI" id="CHEBI:18420"/>
    </ligand>
</feature>
<feature type="binding site" evidence="3">
    <location>
        <position position="822"/>
    </location>
    <ligand>
        <name>ATP</name>
        <dbReference type="ChEBI" id="CHEBI:30616"/>
    </ligand>
</feature>
<feature type="binding site" evidence="3">
    <location>
        <position position="823"/>
    </location>
    <ligand>
        <name>ATP</name>
        <dbReference type="ChEBI" id="CHEBI:30616"/>
    </ligand>
</feature>
<feature type="binding site" evidence="13 22">
    <location>
        <position position="823"/>
    </location>
    <ligand>
        <name>Mg(2+)</name>
        <dbReference type="ChEBI" id="CHEBI:18420"/>
    </ligand>
</feature>
<feature type="site" description="Cleavage; by CASP3, CASP6 and CASP7" evidence="8">
    <location>
        <begin position="442"/>
        <end position="443"/>
    </location>
</feature>
<feature type="site" description="Cleavage; by CASP3" evidence="8">
    <location>
        <begin position="448"/>
        <end position="449"/>
    </location>
</feature>
<feature type="site" description="Cleavage; by CASP3 and CASP7" evidence="8">
    <location>
        <begin position="484"/>
        <end position="485"/>
    </location>
</feature>
<feature type="modified residue" description="Phosphoserine" evidence="23 25">
    <location>
        <position position="445"/>
    </location>
</feature>
<feature type="modified residue" description="Phosphoserine" evidence="24 25">
    <location>
        <position position="1108"/>
    </location>
</feature>
<feature type="modified residue" description="Phosphoserine" evidence="12 25">
    <location>
        <position position="1116"/>
    </location>
</feature>
<feature type="modified residue" description="Phosphoserine" evidence="25">
    <location>
        <position position="1126"/>
    </location>
</feature>
<feature type="splice variant" id="VSP_007309" description="In isoform 2." evidence="14">
    <original>RNLSCRRASDSLSARPSVRPLLLRTFSDESNVL</original>
    <variation>VHHLISSSA</variation>
    <location>
        <begin position="1100"/>
        <end position="1132"/>
    </location>
</feature>
<feature type="splice variant" id="VSP_013373" description="In isoform 3." evidence="15">
    <original>RNLSCRRASDSLSARPSVRPLLLRTFSDESNVL</original>
    <variation>NPNLELPMLLSYKHTDSGYS</variation>
    <location>
        <begin position="1100"/>
        <end position="1132"/>
    </location>
</feature>
<feature type="splice variant" id="VSP_013374" description="In isoform 4." evidence="14">
    <original>RNLSCRRASDSLSARPSVRPLLLRTFSDESNVL</original>
    <variation>VTKRLPSSGTSAIFMLSQTSSNHSFSWSE</variation>
    <location>
        <begin position="1100"/>
        <end position="1132"/>
    </location>
</feature>
<feature type="sequence variant" id="VAR_021827" description="In dbSNP:rs2491014." evidence="5">
    <original>C</original>
    <variation>W</variation>
    <location>
        <position position="114"/>
    </location>
</feature>
<feature type="sequence variant" id="VAR_036501" description="In a colorectal cancer sample; somatic mutation." evidence="6">
    <original>T</original>
    <variation>I</variation>
    <location>
        <position position="157"/>
    </location>
</feature>
<feature type="sequence variant" id="VAR_081016" description="In HACXL; decreased phosphatidylserine translocation from the outer to the inner leaflet of erythrocytes cell membrane; dbSNP:rs1556323334." evidence="11">
    <original>T</original>
    <variation>N</variation>
    <location>
        <position position="418"/>
    </location>
</feature>
<feature type="sequence variant" id="VAR_055546" description="In dbSNP:rs17281983.">
    <original>Y</original>
    <variation>C</variation>
    <location>
        <position position="522"/>
    </location>
</feature>
<feature type="sequence variant" id="VAR_036502" description="In a colorectal cancer sample; somatic mutation." evidence="6">
    <original>Q</original>
    <variation>P</variation>
    <location>
        <position position="931"/>
    </location>
</feature>
<feature type="sequence variant" id="VAR_061036" description="In dbSNP:rs55724992.">
    <original>V</original>
    <variation>M</variation>
    <location>
        <position position="972"/>
    </location>
</feature>
<feature type="mutagenesis site" description="Decreases ATPase activity." evidence="13">
    <original>Q</original>
    <variation>A</variation>
    <location>
        <position position="66"/>
    </location>
</feature>
<feature type="mutagenesis site" description="Decreases ATPase activity." evidence="13">
    <original>R</original>
    <variation>A</variation>
    <location>
        <position position="69"/>
    </location>
</feature>
<feature type="mutagenesis site" description="Decreases ATPase activity." evidence="13">
    <original>N</original>
    <variation>A</variation>
    <location>
        <position position="72"/>
    </location>
</feature>
<feature type="mutagenesis site" description="Impairs ATPase flippase activity." evidence="13">
    <original>F</original>
    <variation>A</variation>
    <location>
        <position position="75"/>
    </location>
</feature>
<feature type="mutagenesis site" description="Decreases ATPase activity." evidence="13">
    <original>T</original>
    <variation>A</variation>
    <location>
        <position position="93"/>
    </location>
</feature>
<feature type="mutagenesis site" description="Impairs ATPase flippase activity." evidence="13">
    <original>V</original>
    <variation>A</variation>
    <location>
        <position position="101"/>
    </location>
</feature>
<feature type="mutagenesis site" description="Has no effect on endoplasmic reticulum to plasma membrane trafficking. Impairs ATPase flippase activity." evidence="9">
    <original>E</original>
    <variation>Q</variation>
    <location>
        <position position="184"/>
    </location>
</feature>
<feature type="mutagenesis site" description="Impairs ATPase flippase activity." evidence="13">
    <original>V</original>
    <variation>F</variation>
    <location>
        <position position="352"/>
    </location>
</feature>
<feature type="mutagenesis site" description="Decreases ATPase activity." evidence="13">
    <original>L</original>
    <variation>F</variation>
    <location>
        <position position="353"/>
    </location>
</feature>
<feature type="mutagenesis site" description="Impairs ATPase flippase activity." evidence="13">
    <original>N</original>
    <variation>A</variation>
    <location>
        <position position="355"/>
    </location>
</feature>
<feature type="mutagenesis site" description="Has no effect on ATPase flippase activity." evidence="13">
    <original>F</original>
    <variation>N</variation>
    <location>
        <position position="356"/>
    </location>
</feature>
<feature type="mutagenesis site" description="Decreases ATPase flippase activity." evidence="13">
    <original>V</original>
    <variation>F</variation>
    <location>
        <position position="360"/>
    </location>
</feature>
<feature type="mutagenesis site" description="Has minor effect on ATPase flippase activity." evidence="13">
    <original>V</original>
    <variation>I</variation>
    <location>
        <position position="360"/>
    </location>
</feature>
<feature type="mutagenesis site" description="Impairs endoplasmic reticulum to plasma membrane trafficking." evidence="9">
    <original>D</original>
    <variation>N</variation>
    <location>
        <position position="412"/>
    </location>
</feature>
<feature type="mutagenesis site" description="Impairs caspase-mediated cleavage; when associated with A-448 and A-484." evidence="8">
    <original>D</original>
    <variation>A</variation>
    <location>
        <position position="442"/>
    </location>
</feature>
<feature type="mutagenesis site" description="Impairs caspase-mediated cleavage; when associated with A-442 and A-484." evidence="8">
    <original>D</original>
    <variation>A</variation>
    <location>
        <position position="448"/>
    </location>
</feature>
<feature type="mutagenesis site" description="Impairs caspase-mediated cleavage; when associated with A-442 and A-448." evidence="8">
    <original>D</original>
    <variation>A</variation>
    <location>
        <position position="484"/>
    </location>
</feature>
<feature type="mutagenesis site" description="Decreases ATPase flippase activity." evidence="13">
    <original>K</original>
    <variation>A</variation>
    <location>
        <position position="883"/>
    </location>
</feature>
<feature type="mutagenesis site" description="Decreases ATPase flippase activity." evidence="13">
    <original>N</original>
    <variation>A</variation>
    <location>
        <position position="884"/>
    </location>
</feature>
<feature type="mutagenesis site" description="Decreases ATPase flippase activity." evidence="13">
    <original>N</original>
    <variation>A</variation>
    <location>
        <position position="915"/>
    </location>
</feature>
<feature type="mutagenesis site" description="Impairs sorting to endosomal compartments in response to ca(2+) signaling." evidence="12">
    <original>S</original>
    <variation>A</variation>
    <location>
        <position position="1116"/>
    </location>
</feature>
<feature type="mutagenesis site" description="Localizes to endosomal compartments in the absence of ca(2+) signaling." evidence="12">
    <original>S</original>
    <variation>D</variation>
    <location>
        <position position="1116"/>
    </location>
</feature>
<feature type="mutagenesis site" description="Impairs sorting to endosomal compartments in response to ca(2+) signaling." evidence="12">
    <original>L</original>
    <variation>A</variation>
    <location>
        <position position="1120"/>
    </location>
</feature>
<feature type="mutagenesis site" description="Impairs sorting to endosomal compartments in response to ca(2+) signaling." evidence="12">
    <original>L</original>
    <variation>A</variation>
    <location>
        <position position="1121"/>
    </location>
</feature>
<feature type="mutagenesis site" description="Has no effect on sorting to endosomal compartments in response to ca(2+) signaling." evidence="12">
    <original>L</original>
    <variation>A</variation>
    <location>
        <position position="1122"/>
    </location>
</feature>
<feature type="mutagenesis site" description="Decreases sorting to endosomal compartments in response to ca(2+) signaling." evidence="12">
    <original>S</original>
    <variation>A</variation>
    <location>
        <position position="1126"/>
    </location>
</feature>
<feature type="sequence conflict" description="In Ref. 3; BAC86377." evidence="17" ref="3">
    <original>L</original>
    <variation>P</variation>
    <location>
        <position position="537"/>
    </location>
</feature>
<feature type="sequence conflict" description="In Ref. 3; BAC86377." evidence="17" ref="3">
    <original>I</original>
    <variation>V</variation>
    <location>
        <position position="873"/>
    </location>
</feature>
<feature type="strand" evidence="28">
    <location>
        <begin position="23"/>
        <end position="26"/>
    </location>
</feature>
<feature type="strand" evidence="28">
    <location>
        <begin position="55"/>
        <end position="57"/>
    </location>
</feature>
<feature type="helix" evidence="28">
    <location>
        <begin position="58"/>
        <end position="66"/>
    </location>
</feature>
<feature type="helix" evidence="28">
    <location>
        <begin position="70"/>
        <end position="84"/>
    </location>
</feature>
<feature type="helix" evidence="28">
    <location>
        <begin position="92"/>
        <end position="123"/>
    </location>
</feature>
<feature type="strand" evidence="28">
    <location>
        <begin position="127"/>
        <end position="131"/>
    </location>
</feature>
<feature type="strand" evidence="28">
    <location>
        <begin position="133"/>
        <end position="140"/>
    </location>
</feature>
<feature type="helix" evidence="28">
    <location>
        <begin position="141"/>
        <end position="143"/>
    </location>
</feature>
<feature type="strand" evidence="28">
    <location>
        <begin position="149"/>
        <end position="151"/>
    </location>
</feature>
<feature type="strand" evidence="28">
    <location>
        <begin position="159"/>
        <end position="163"/>
    </location>
</feature>
<feature type="strand" evidence="28">
    <location>
        <begin position="166"/>
        <end position="171"/>
    </location>
</feature>
<feature type="strand" evidence="28">
    <location>
        <begin position="173"/>
        <end position="177"/>
    </location>
</feature>
<feature type="turn" evidence="28">
    <location>
        <begin position="179"/>
        <end position="181"/>
    </location>
</feature>
<feature type="strand" evidence="26">
    <location>
        <begin position="188"/>
        <end position="191"/>
    </location>
</feature>
<feature type="helix" evidence="28">
    <location>
        <begin position="194"/>
        <end position="196"/>
    </location>
</feature>
<feature type="strand" evidence="28">
    <location>
        <begin position="200"/>
        <end position="203"/>
    </location>
</feature>
<feature type="strand" evidence="28">
    <location>
        <begin position="211"/>
        <end position="214"/>
    </location>
</feature>
<feature type="strand" evidence="28">
    <location>
        <begin position="226"/>
        <end position="228"/>
    </location>
</feature>
<feature type="strand" evidence="29">
    <location>
        <begin position="233"/>
        <end position="235"/>
    </location>
</feature>
<feature type="strand" evidence="28">
    <location>
        <begin position="240"/>
        <end position="242"/>
    </location>
</feature>
<feature type="turn" evidence="28">
    <location>
        <begin position="244"/>
        <end position="246"/>
    </location>
</feature>
<feature type="strand" evidence="28">
    <location>
        <begin position="253"/>
        <end position="256"/>
    </location>
</feature>
<feature type="strand" evidence="28">
    <location>
        <begin position="258"/>
        <end position="263"/>
    </location>
</feature>
<feature type="strand" evidence="28">
    <location>
        <begin position="268"/>
        <end position="271"/>
    </location>
</feature>
<feature type="helix" evidence="28">
    <location>
        <begin position="272"/>
        <end position="275"/>
    </location>
</feature>
<feature type="helix" evidence="28">
    <location>
        <begin position="286"/>
        <end position="316"/>
    </location>
</feature>
<feature type="helix" evidence="28">
    <location>
        <begin position="320"/>
        <end position="322"/>
    </location>
</feature>
<feature type="strand" evidence="28">
    <location>
        <begin position="326"/>
        <end position="328"/>
    </location>
</feature>
<feature type="helix" evidence="28">
    <location>
        <begin position="333"/>
        <end position="336"/>
    </location>
</feature>
<feature type="helix" evidence="28">
    <location>
        <begin position="339"/>
        <end position="354"/>
    </location>
</feature>
<feature type="helix" evidence="28">
    <location>
        <begin position="355"/>
        <end position="357"/>
    </location>
</feature>
<feature type="helix" evidence="28">
    <location>
        <begin position="360"/>
        <end position="373"/>
    </location>
</feature>
<feature type="helix" evidence="28">
    <location>
        <begin position="375"/>
        <end position="379"/>
    </location>
</feature>
<feature type="strand" evidence="28">
    <location>
        <begin position="381"/>
        <end position="385"/>
    </location>
</feature>
<feature type="turn" evidence="28">
    <location>
        <begin position="386"/>
        <end position="389"/>
    </location>
</feature>
<feature type="strand" evidence="28">
    <location>
        <begin position="393"/>
        <end position="395"/>
    </location>
</feature>
<feature type="helix" evidence="28">
    <location>
        <begin position="397"/>
        <end position="402"/>
    </location>
</feature>
<feature type="strand" evidence="28">
    <location>
        <begin position="408"/>
        <end position="411"/>
    </location>
</feature>
<feature type="turn" evidence="28">
    <location>
        <begin position="415"/>
        <end position="417"/>
    </location>
</feature>
<feature type="strand" evidence="26">
    <location>
        <begin position="423"/>
        <end position="429"/>
    </location>
</feature>
<feature type="strand" evidence="26">
    <location>
        <begin position="459"/>
        <end position="461"/>
    </location>
</feature>
<feature type="helix" evidence="26">
    <location>
        <begin position="462"/>
        <end position="470"/>
    </location>
</feature>
<feature type="strand" evidence="26">
    <location>
        <begin position="471"/>
        <end position="473"/>
    </location>
</feature>
<feature type="strand" evidence="26">
    <location>
        <begin position="486"/>
        <end position="489"/>
    </location>
</feature>
<feature type="helix" evidence="26">
    <location>
        <begin position="499"/>
        <end position="510"/>
    </location>
</feature>
<feature type="strand" evidence="26">
    <location>
        <begin position="519"/>
        <end position="523"/>
    </location>
</feature>
<feature type="strand" evidence="26">
    <location>
        <begin position="528"/>
        <end position="530"/>
    </location>
</feature>
<feature type="strand" evidence="26">
    <location>
        <begin position="535"/>
        <end position="541"/>
    </location>
</feature>
<feature type="turn" evidence="26">
    <location>
        <begin position="545"/>
        <end position="547"/>
    </location>
</feature>
<feature type="strand" evidence="26">
    <location>
        <begin position="549"/>
        <end position="555"/>
    </location>
</feature>
<feature type="strand" evidence="26">
    <location>
        <begin position="561"/>
        <end position="567"/>
    </location>
</feature>
<feature type="turn" evidence="26">
    <location>
        <begin position="570"/>
        <end position="572"/>
    </location>
</feature>
<feature type="turn" evidence="29">
    <location>
        <begin position="573"/>
        <end position="575"/>
    </location>
</feature>
<feature type="helix" evidence="26">
    <location>
        <begin position="578"/>
        <end position="580"/>
    </location>
</feature>
<feature type="helix" evidence="26">
    <location>
        <begin position="581"/>
        <end position="593"/>
    </location>
</feature>
<feature type="strand" evidence="26">
    <location>
        <begin position="597"/>
        <end position="606"/>
    </location>
</feature>
<feature type="helix" evidence="26">
    <location>
        <begin position="608"/>
        <end position="622"/>
    </location>
</feature>
<feature type="helix" evidence="26">
    <location>
        <begin position="628"/>
        <end position="636"/>
    </location>
</feature>
<feature type="strand" evidence="26">
    <location>
        <begin position="639"/>
        <end position="652"/>
    </location>
</feature>
<feature type="helix" evidence="28">
    <location>
        <begin position="659"/>
        <end position="668"/>
    </location>
</feature>
<feature type="strand" evidence="28">
    <location>
        <begin position="672"/>
        <end position="676"/>
    </location>
</feature>
<feature type="helix" evidence="28">
    <location>
        <begin position="681"/>
        <end position="688"/>
    </location>
</feature>
<feature type="turn" evidence="28">
    <location>
        <begin position="689"/>
        <end position="692"/>
    </location>
</feature>
<feature type="strand" evidence="28">
    <location>
        <begin position="699"/>
        <end position="702"/>
    </location>
</feature>
<feature type="turn" evidence="28">
    <location>
        <begin position="705"/>
        <end position="707"/>
    </location>
</feature>
<feature type="strand" evidence="28">
    <location>
        <begin position="710"/>
        <end position="712"/>
    </location>
</feature>
<feature type="helix" evidence="28">
    <location>
        <begin position="713"/>
        <end position="722"/>
    </location>
</feature>
<feature type="turn" evidence="28">
    <location>
        <begin position="723"/>
        <end position="728"/>
    </location>
</feature>
<feature type="turn" evidence="28">
    <location>
        <begin position="747"/>
        <end position="749"/>
    </location>
</feature>
<feature type="strand" evidence="28">
    <location>
        <begin position="750"/>
        <end position="755"/>
    </location>
</feature>
<feature type="helix" evidence="28">
    <location>
        <begin position="756"/>
        <end position="764"/>
    </location>
</feature>
<feature type="turn" evidence="28">
    <location>
        <begin position="765"/>
        <end position="767"/>
    </location>
</feature>
<feature type="strand" evidence="28">
    <location>
        <begin position="770"/>
        <end position="772"/>
    </location>
</feature>
<feature type="helix" evidence="28">
    <location>
        <begin position="774"/>
        <end position="783"/>
    </location>
</feature>
<feature type="strand" evidence="28">
    <location>
        <begin position="788"/>
        <end position="792"/>
    </location>
</feature>
<feature type="helix" evidence="28">
    <location>
        <begin position="797"/>
        <end position="805"/>
    </location>
</feature>
<feature type="strand" evidence="28">
    <location>
        <begin position="808"/>
        <end position="810"/>
    </location>
</feature>
<feature type="strand" evidence="28">
    <location>
        <begin position="814"/>
        <end position="821"/>
    </location>
</feature>
<feature type="helix" evidence="28">
    <location>
        <begin position="824"/>
        <end position="827"/>
    </location>
</feature>
<feature type="strand" evidence="28">
    <location>
        <begin position="830"/>
        <end position="835"/>
    </location>
</feature>
<feature type="turn" evidence="28">
    <location>
        <begin position="843"/>
        <end position="847"/>
    </location>
</feature>
<feature type="strand" evidence="28">
    <location>
        <begin position="848"/>
        <end position="851"/>
    </location>
</feature>
<feature type="strand" evidence="28">
    <location>
        <begin position="853"/>
        <end position="855"/>
    </location>
</feature>
<feature type="helix" evidence="28">
    <location>
        <begin position="857"/>
        <end position="862"/>
    </location>
</feature>
<feature type="helix" evidence="28">
    <location>
        <begin position="865"/>
        <end position="893"/>
    </location>
</feature>
<feature type="helix" evidence="28">
    <location>
        <begin position="894"/>
        <end position="896"/>
    </location>
</feature>
<feature type="turn" evidence="28">
    <location>
        <begin position="897"/>
        <end position="899"/>
    </location>
</feature>
<feature type="helix" evidence="28">
    <location>
        <begin position="908"/>
        <end position="913"/>
    </location>
</feature>
<feature type="helix" evidence="28">
    <location>
        <begin position="914"/>
        <end position="918"/>
    </location>
</feature>
<feature type="helix" evidence="28">
    <location>
        <begin position="922"/>
        <end position="926"/>
    </location>
</feature>
<feature type="helix" evidence="28">
    <location>
        <begin position="935"/>
        <end position="938"/>
    </location>
</feature>
<feature type="helix" evidence="28">
    <location>
        <begin position="942"/>
        <end position="948"/>
    </location>
</feature>
<feature type="turn" evidence="27">
    <location>
        <begin position="949"/>
        <end position="951"/>
    </location>
</feature>
<feature type="helix" evidence="28">
    <location>
        <begin position="952"/>
        <end position="954"/>
    </location>
</feature>
<feature type="helix" evidence="28">
    <location>
        <begin position="956"/>
        <end position="980"/>
    </location>
</feature>
<feature type="strand" evidence="28">
    <location>
        <begin position="982"/>
        <end position="984"/>
    </location>
</feature>
<feature type="strand" evidence="26">
    <location>
        <begin position="986"/>
        <end position="989"/>
    </location>
</feature>
<feature type="helix" evidence="28">
    <location>
        <begin position="995"/>
        <end position="1017"/>
    </location>
</feature>
<feature type="helix" evidence="28">
    <location>
        <begin position="1023"/>
        <end position="1043"/>
    </location>
</feature>
<feature type="strand" evidence="28">
    <location>
        <begin position="1049"/>
        <end position="1052"/>
    </location>
</feature>
<feature type="helix" evidence="28">
    <location>
        <begin position="1059"/>
        <end position="1062"/>
    </location>
</feature>
<feature type="helix" evidence="28">
    <location>
        <begin position="1063"/>
        <end position="1065"/>
    </location>
</feature>
<feature type="helix" evidence="28">
    <location>
        <begin position="1067"/>
        <end position="1079"/>
    </location>
</feature>
<feature type="helix" evidence="28">
    <location>
        <begin position="1082"/>
        <end position="1090"/>
    </location>
</feature>
<protein>
    <recommendedName>
        <fullName>Phospholipid-transporting ATPase IG</fullName>
        <ecNumber evidence="8 9 13">7.6.2.1</ecNumber>
    </recommendedName>
    <alternativeName>
        <fullName>ATPase IQ</fullName>
    </alternativeName>
    <alternativeName>
        <fullName>ATPase class VI type 11C</fullName>
    </alternativeName>
    <alternativeName>
        <fullName>P4-ATPase flippase complex alpha subunit ATP11C</fullName>
    </alternativeName>
</protein>
<evidence type="ECO:0000250" key="1">
    <source>
        <dbReference type="UniProtKB" id="P04191"/>
    </source>
</evidence>
<evidence type="ECO:0000250" key="2">
    <source>
        <dbReference type="UniProtKB" id="Q9QZW0"/>
    </source>
</evidence>
<evidence type="ECO:0000250" key="3">
    <source>
        <dbReference type="UniProtKB" id="Q9Y2Q0"/>
    </source>
</evidence>
<evidence type="ECO:0000255" key="4"/>
<evidence type="ECO:0000269" key="5">
    <source>
    </source>
</evidence>
<evidence type="ECO:0000269" key="6">
    <source>
    </source>
</evidence>
<evidence type="ECO:0000269" key="7">
    <source>
    </source>
</evidence>
<evidence type="ECO:0000269" key="8">
    <source>
    </source>
</evidence>
<evidence type="ECO:0000269" key="9">
    <source>
    </source>
</evidence>
<evidence type="ECO:0000269" key="10">
    <source>
    </source>
</evidence>
<evidence type="ECO:0000269" key="11">
    <source>
    </source>
</evidence>
<evidence type="ECO:0000269" key="12">
    <source>
    </source>
</evidence>
<evidence type="ECO:0000269" key="13">
    <source>
    </source>
</evidence>
<evidence type="ECO:0000303" key="14">
    <source>
    </source>
</evidence>
<evidence type="ECO:0000303" key="15">
    <source>
    </source>
</evidence>
<evidence type="ECO:0000303" key="16">
    <source>
    </source>
</evidence>
<evidence type="ECO:0000305" key="17"/>
<evidence type="ECO:0000305" key="18">
    <source>
    </source>
</evidence>
<evidence type="ECO:0000305" key="19">
    <source>
    </source>
</evidence>
<evidence type="ECO:0000305" key="20">
    <source>
    </source>
</evidence>
<evidence type="ECO:0000305" key="21">
    <source>
    </source>
</evidence>
<evidence type="ECO:0007744" key="22">
    <source>
        <dbReference type="PDB" id="6LKN"/>
    </source>
</evidence>
<evidence type="ECO:0007744" key="23">
    <source>
    </source>
</evidence>
<evidence type="ECO:0007744" key="24">
    <source>
    </source>
</evidence>
<evidence type="ECO:0007744" key="25">
    <source>
    </source>
</evidence>
<evidence type="ECO:0007829" key="26">
    <source>
        <dbReference type="PDB" id="7BSQ"/>
    </source>
</evidence>
<evidence type="ECO:0007829" key="27">
    <source>
        <dbReference type="PDB" id="7BSU"/>
    </source>
</evidence>
<evidence type="ECO:0007829" key="28">
    <source>
        <dbReference type="PDB" id="7BSV"/>
    </source>
</evidence>
<evidence type="ECO:0007829" key="29">
    <source>
        <dbReference type="PDB" id="7VSH"/>
    </source>
</evidence>
<comment type="function">
    <text evidence="2 8 9 11 13">Catalytic component of a P4-ATPase flippase complex which catalyzes the hydrolysis of ATP coupled to the transport of aminophospholipids, phosphatidylserines (PS) and phosphatidylethanolamines (PE), from the outer to the inner leaflet of the plasma membrane (PubMed:24904167, PubMed:25315773, PubMed:26567335, PubMed:32493773). Major PS-flippase in immune cell subsets. In erythrocyte plasma membrane, it is required to maintain PS in the inner leaflet preventing its exposure on the surface. This asymmetric distribution is critical for the survival of erythrocytes in circulation since externalized PS is a phagocytic signal for erythrocyte clearance by splenic macrophages (PubMed:26944472). Required for B cell differentiation past the pro-B cell stage (By similarity). Seems to mediate PS flipping in pro-B cells (By similarity). May be involved in the transport of cholestatic bile acids (By similarity).</text>
</comment>
<comment type="catalytic activity">
    <reaction evidence="8 9 10 13">
        <text>ATP + H2O + phospholipidSide 1 = ADP + phosphate + phospholipidSide 2.</text>
        <dbReference type="EC" id="7.6.2.1"/>
    </reaction>
</comment>
<comment type="catalytic activity">
    <reaction evidence="8 9 10 13">
        <text>a 1,2-diacyl-sn-glycero-3-phospho-L-serine(out) + ATP + H2O = a 1,2-diacyl-sn-glycero-3-phospho-L-serine(in) + ADP + phosphate + H(+)</text>
        <dbReference type="Rhea" id="RHEA:38567"/>
        <dbReference type="ChEBI" id="CHEBI:15377"/>
        <dbReference type="ChEBI" id="CHEBI:15378"/>
        <dbReference type="ChEBI" id="CHEBI:30616"/>
        <dbReference type="ChEBI" id="CHEBI:43474"/>
        <dbReference type="ChEBI" id="CHEBI:57262"/>
        <dbReference type="ChEBI" id="CHEBI:456216"/>
    </reaction>
    <physiologicalReaction direction="left-to-right" evidence="18 19 20 21">
        <dbReference type="Rhea" id="RHEA:38568"/>
    </physiologicalReaction>
</comment>
<comment type="catalytic activity">
    <reaction evidence="8 9 10 13">
        <text>a 1,2-diacyl-sn-glycero-3-phosphoethanolamine(out) + ATP + H2O = a 1,2-diacyl-sn-glycero-3-phosphoethanolamine(in) + ADP + phosphate + H(+)</text>
        <dbReference type="Rhea" id="RHEA:66132"/>
        <dbReference type="ChEBI" id="CHEBI:15377"/>
        <dbReference type="ChEBI" id="CHEBI:15378"/>
        <dbReference type="ChEBI" id="CHEBI:30616"/>
        <dbReference type="ChEBI" id="CHEBI:43474"/>
        <dbReference type="ChEBI" id="CHEBI:64612"/>
        <dbReference type="ChEBI" id="CHEBI:456216"/>
    </reaction>
    <physiologicalReaction direction="left-to-right" evidence="18 19 20 21">
        <dbReference type="Rhea" id="RHEA:66133"/>
    </physiologicalReaction>
</comment>
<comment type="cofactor">
    <cofactor evidence="3">
        <name>Mg(2+)</name>
        <dbReference type="ChEBI" id="CHEBI:18420"/>
    </cofactor>
</comment>
<comment type="activity regulation">
    <text evidence="8 10">The flippase activity is inactivated by caspase-mediated cleavage in apoptotic cells, allowing for PS exposure on the cell surface and engulfment of apoptotic cells by macrophages. The ATPase activity is up-regulated by aminophospholipids PS and PE and down-regulated by Increasing intracellular Ca2+ levels.</text>
</comment>
<comment type="biophysicochemical properties">
    <kinetics>
        <KM evidence="10">1.3 uM for ATP (in the presence of PS)</KM>
        <KM evidence="10">11 uM for ATP (in the presence of PE)</KM>
        <Vmax evidence="10">8.9 nmol/min/ug enzyme toward ATP (in the presence of PS)</Vmax>
        <Vmax evidence="10">6.7 nmol/min/ug enzyme toward ATP (in the presence of PE)</Vmax>
    </kinetics>
</comment>
<comment type="subunit">
    <text evidence="7 13">Component of a P4-ATPase flippase complex which consists of a catalytic alpha subunit ATP11C and an accessory beta subunit TMEM30A.</text>
</comment>
<comment type="interaction">
    <interactant intactId="EBI-11279131">
        <id>Q8NB49</id>
    </interactant>
    <interactant intactId="EBI-2836942">
        <id>Q9NV96</id>
        <label>TMEM30A</label>
    </interactant>
    <organismsDiffer>false</organismsDiffer>
    <experiments>3</experiments>
</comment>
<comment type="subcellular location">
    <subcellularLocation>
        <location evidence="7 9">Cell membrane</location>
        <topology evidence="4">Multi-pass membrane protein</topology>
    </subcellularLocation>
    <subcellularLocation>
        <location evidence="7 9">Endoplasmic reticulum membrane</location>
        <topology evidence="4">Multi-pass membrane protein</topology>
    </subcellularLocation>
    <subcellularLocation>
        <location evidence="12">Early endosome membrane</location>
        <topology evidence="4">Multi-pass membrane protein</topology>
    </subcellularLocation>
    <subcellularLocation>
        <location evidence="12">Recycling endosome membrane</location>
        <topology evidence="4">Multi-pass membrane protein</topology>
    </subcellularLocation>
    <text evidence="12">Efficient exit from the endoplasmic reticulum requires the presence of TMEM30A. Internalized via clathrin-dependent endocytosis in response to ca(2+) signaling induced by G-protein coupled serotonin and histamine receptors.</text>
</comment>
<comment type="alternative products">
    <event type="alternative splicing"/>
    <isoform>
        <id>Q8NB49-1</id>
        <name>1</name>
        <sequence type="displayed"/>
    </isoform>
    <isoform>
        <id>Q8NB49-2</id>
        <name>2</name>
        <sequence type="described" ref="VSP_007309"/>
    </isoform>
    <isoform>
        <id>Q8NB49-3</id>
        <name>3</name>
        <sequence type="described" ref="VSP_013373"/>
    </isoform>
    <isoform>
        <id>Q8NB49-4</id>
        <name>4</name>
        <sequence type="described" ref="VSP_013374"/>
    </isoform>
</comment>
<comment type="tissue specificity">
    <text evidence="5 10">Widely expressed.</text>
</comment>
<comment type="domain">
    <text evidence="12">The di-leucine motif is required for sorting to clathrin-coated endosomes upon ca(2+)-dependent PRKCA activation.</text>
</comment>
<comment type="PTM">
    <text evidence="8">Proteolytically cleaved by CASP3, CASP6 and CASP7.</text>
</comment>
<comment type="PTM">
    <text evidence="12">Phosphorylated at Ser-1116 likely by PRKCA; this creates a functional di-leucine motif that is sufficient for endocytosis.</text>
</comment>
<comment type="disease" evidence="11">
    <disease id="DI-05302">
        <name>Hemolytic anemia, congenital, X-linked</name>
        <acronym>HACXL</acronym>
        <description>An X-linked hematologic disease characterized by shortened survival of erythrocytes due to congenital hemolysis that cannot be compensated by bone marrow activity. Clinical features are mild jaundice and anemia. Red cells morphology is normal.</description>
        <dbReference type="MIM" id="301015"/>
    </disease>
    <text>The disease is caused by variants affecting the gene represented in this entry.</text>
</comment>
<comment type="similarity">
    <text evidence="17">Belongs to the cation transport ATPase (P-type) (TC 3.A.3) family. Type IV subfamily.</text>
</comment>
<comment type="sequence caution" evidence="17">
    <conflict type="erroneous initiation">
        <sequence resource="EMBL-CDS" id="BAC03692"/>
    </conflict>
</comment>
<comment type="sequence caution" evidence="17">
    <conflict type="erroneous initiation">
        <sequence resource="EMBL-CDS" id="BAC86172"/>
    </conflict>
</comment>
<comment type="sequence caution" evidence="17">
    <conflict type="erroneous initiation">
        <sequence resource="EMBL-CDS" id="BAC86377"/>
    </conflict>
</comment>
<comment type="sequence caution" evidence="17">
    <conflict type="erroneous initiation">
        <sequence resource="EMBL-CDS" id="BAD18440"/>
    </conflict>
</comment>
<accession>Q8NB49</accession>
<accession>Q5JT69</accession>
<accession>Q5JT70</accession>
<accession>Q5JT71</accession>
<accession>Q5JT72</accession>
<accession>Q5JT73</accession>
<accession>Q6ZND5</accession>
<accession>Q6ZU50</accession>
<accession>Q6ZUP7</accession>
<accession>Q70IJ9</accession>
<accession>Q70IK0</accession>
<accession>Q8WX24</accession>
<proteinExistence type="evidence at protein level"/>
<organism>
    <name type="scientific">Homo sapiens</name>
    <name type="common">Human</name>
    <dbReference type="NCBI Taxonomy" id="9606"/>
    <lineage>
        <taxon>Eukaryota</taxon>
        <taxon>Metazoa</taxon>
        <taxon>Chordata</taxon>
        <taxon>Craniata</taxon>
        <taxon>Vertebrata</taxon>
        <taxon>Euteleostomi</taxon>
        <taxon>Mammalia</taxon>
        <taxon>Eutheria</taxon>
        <taxon>Euarchontoglires</taxon>
        <taxon>Primates</taxon>
        <taxon>Haplorrhini</taxon>
        <taxon>Catarrhini</taxon>
        <taxon>Hominidae</taxon>
        <taxon>Homo</taxon>
    </lineage>
</organism>
<reference key="1">
    <citation type="journal article" date="2004" name="Genomics">
        <title>X-linked hypoparathyroidism region on Xq27 is evolutionarily conserved with regions on 3q26 and 13q34 and contains a novel P-type ATPase.</title>
        <authorList>
            <person name="Andrew-Nesbit M."/>
            <person name="Bowl M.R."/>
            <person name="Harding B."/>
            <person name="Schlessinger D."/>
            <person name="Whyte M.P."/>
            <person name="Thakker R.V."/>
        </authorList>
    </citation>
    <scope>NUCLEOTIDE SEQUENCE [MRNA] (ISOFORMS 1 AND 3)</scope>
    <scope>TISSUE SPECIFICITY</scope>
    <scope>VARIANT TRP-114</scope>
    <source>
        <tissue>Liver</tissue>
    </source>
</reference>
<reference key="2">
    <citation type="journal article" date="2005" name="Nature">
        <title>The DNA sequence of the human X chromosome.</title>
        <authorList>
            <person name="Ross M.T."/>
            <person name="Grafham D.V."/>
            <person name="Coffey A.J."/>
            <person name="Scherer S."/>
            <person name="McLay K."/>
            <person name="Muzny D."/>
            <person name="Platzer M."/>
            <person name="Howell G.R."/>
            <person name="Burrows C."/>
            <person name="Bird C.P."/>
            <person name="Frankish A."/>
            <person name="Lovell F.L."/>
            <person name="Howe K.L."/>
            <person name="Ashurst J.L."/>
            <person name="Fulton R.S."/>
            <person name="Sudbrak R."/>
            <person name="Wen G."/>
            <person name="Jones M.C."/>
            <person name="Hurles M.E."/>
            <person name="Andrews T.D."/>
            <person name="Scott C.E."/>
            <person name="Searle S."/>
            <person name="Ramser J."/>
            <person name="Whittaker A."/>
            <person name="Deadman R."/>
            <person name="Carter N.P."/>
            <person name="Hunt S.E."/>
            <person name="Chen R."/>
            <person name="Cree A."/>
            <person name="Gunaratne P."/>
            <person name="Havlak P."/>
            <person name="Hodgson A."/>
            <person name="Metzker M.L."/>
            <person name="Richards S."/>
            <person name="Scott G."/>
            <person name="Steffen D."/>
            <person name="Sodergren E."/>
            <person name="Wheeler D.A."/>
            <person name="Worley K.C."/>
            <person name="Ainscough R."/>
            <person name="Ambrose K.D."/>
            <person name="Ansari-Lari M.A."/>
            <person name="Aradhya S."/>
            <person name="Ashwell R.I."/>
            <person name="Babbage A.K."/>
            <person name="Bagguley C.L."/>
            <person name="Ballabio A."/>
            <person name="Banerjee R."/>
            <person name="Barker G.E."/>
            <person name="Barlow K.F."/>
            <person name="Barrett I.P."/>
            <person name="Bates K.N."/>
            <person name="Beare D.M."/>
            <person name="Beasley H."/>
            <person name="Beasley O."/>
            <person name="Beck A."/>
            <person name="Bethel G."/>
            <person name="Blechschmidt K."/>
            <person name="Brady N."/>
            <person name="Bray-Allen S."/>
            <person name="Bridgeman A.M."/>
            <person name="Brown A.J."/>
            <person name="Brown M.J."/>
            <person name="Bonnin D."/>
            <person name="Bruford E.A."/>
            <person name="Buhay C."/>
            <person name="Burch P."/>
            <person name="Burford D."/>
            <person name="Burgess J."/>
            <person name="Burrill W."/>
            <person name="Burton J."/>
            <person name="Bye J.M."/>
            <person name="Carder C."/>
            <person name="Carrel L."/>
            <person name="Chako J."/>
            <person name="Chapman J.C."/>
            <person name="Chavez D."/>
            <person name="Chen E."/>
            <person name="Chen G."/>
            <person name="Chen Y."/>
            <person name="Chen Z."/>
            <person name="Chinault C."/>
            <person name="Ciccodicola A."/>
            <person name="Clark S.Y."/>
            <person name="Clarke G."/>
            <person name="Clee C.M."/>
            <person name="Clegg S."/>
            <person name="Clerc-Blankenburg K."/>
            <person name="Clifford K."/>
            <person name="Cobley V."/>
            <person name="Cole C.G."/>
            <person name="Conquer J.S."/>
            <person name="Corby N."/>
            <person name="Connor R.E."/>
            <person name="David R."/>
            <person name="Davies J."/>
            <person name="Davis C."/>
            <person name="Davis J."/>
            <person name="Delgado O."/>
            <person name="Deshazo D."/>
            <person name="Dhami P."/>
            <person name="Ding Y."/>
            <person name="Dinh H."/>
            <person name="Dodsworth S."/>
            <person name="Draper H."/>
            <person name="Dugan-Rocha S."/>
            <person name="Dunham A."/>
            <person name="Dunn M."/>
            <person name="Durbin K.J."/>
            <person name="Dutta I."/>
            <person name="Eades T."/>
            <person name="Ellwood M."/>
            <person name="Emery-Cohen A."/>
            <person name="Errington H."/>
            <person name="Evans K.L."/>
            <person name="Faulkner L."/>
            <person name="Francis F."/>
            <person name="Frankland J."/>
            <person name="Fraser A.E."/>
            <person name="Galgoczy P."/>
            <person name="Gilbert J."/>
            <person name="Gill R."/>
            <person name="Gloeckner G."/>
            <person name="Gregory S.G."/>
            <person name="Gribble S."/>
            <person name="Griffiths C."/>
            <person name="Grocock R."/>
            <person name="Gu Y."/>
            <person name="Gwilliam R."/>
            <person name="Hamilton C."/>
            <person name="Hart E.A."/>
            <person name="Hawes A."/>
            <person name="Heath P.D."/>
            <person name="Heitmann K."/>
            <person name="Hennig S."/>
            <person name="Hernandez J."/>
            <person name="Hinzmann B."/>
            <person name="Ho S."/>
            <person name="Hoffs M."/>
            <person name="Howden P.J."/>
            <person name="Huckle E.J."/>
            <person name="Hume J."/>
            <person name="Hunt P.J."/>
            <person name="Hunt A.R."/>
            <person name="Isherwood J."/>
            <person name="Jacob L."/>
            <person name="Johnson D."/>
            <person name="Jones S."/>
            <person name="de Jong P.J."/>
            <person name="Joseph S.S."/>
            <person name="Keenan S."/>
            <person name="Kelly S."/>
            <person name="Kershaw J.K."/>
            <person name="Khan Z."/>
            <person name="Kioschis P."/>
            <person name="Klages S."/>
            <person name="Knights A.J."/>
            <person name="Kosiura A."/>
            <person name="Kovar-Smith C."/>
            <person name="Laird G.K."/>
            <person name="Langford C."/>
            <person name="Lawlor S."/>
            <person name="Leversha M."/>
            <person name="Lewis L."/>
            <person name="Liu W."/>
            <person name="Lloyd C."/>
            <person name="Lloyd D.M."/>
            <person name="Loulseged H."/>
            <person name="Loveland J.E."/>
            <person name="Lovell J.D."/>
            <person name="Lozado R."/>
            <person name="Lu J."/>
            <person name="Lyne R."/>
            <person name="Ma J."/>
            <person name="Maheshwari M."/>
            <person name="Matthews L.H."/>
            <person name="McDowall J."/>
            <person name="McLaren S."/>
            <person name="McMurray A."/>
            <person name="Meidl P."/>
            <person name="Meitinger T."/>
            <person name="Milne S."/>
            <person name="Miner G."/>
            <person name="Mistry S.L."/>
            <person name="Morgan M."/>
            <person name="Morris S."/>
            <person name="Mueller I."/>
            <person name="Mullikin J.C."/>
            <person name="Nguyen N."/>
            <person name="Nordsiek G."/>
            <person name="Nyakatura G."/>
            <person name="O'dell C.N."/>
            <person name="Okwuonu G."/>
            <person name="Palmer S."/>
            <person name="Pandian R."/>
            <person name="Parker D."/>
            <person name="Parrish J."/>
            <person name="Pasternak S."/>
            <person name="Patel D."/>
            <person name="Pearce A.V."/>
            <person name="Pearson D.M."/>
            <person name="Pelan S.E."/>
            <person name="Perez L."/>
            <person name="Porter K.M."/>
            <person name="Ramsey Y."/>
            <person name="Reichwald K."/>
            <person name="Rhodes S."/>
            <person name="Ridler K.A."/>
            <person name="Schlessinger D."/>
            <person name="Schueler M.G."/>
            <person name="Sehra H.K."/>
            <person name="Shaw-Smith C."/>
            <person name="Shen H."/>
            <person name="Sheridan E.M."/>
            <person name="Shownkeen R."/>
            <person name="Skuce C.D."/>
            <person name="Smith M.L."/>
            <person name="Sotheran E.C."/>
            <person name="Steingruber H.E."/>
            <person name="Steward C.A."/>
            <person name="Storey R."/>
            <person name="Swann R.M."/>
            <person name="Swarbreck D."/>
            <person name="Tabor P.E."/>
            <person name="Taudien S."/>
            <person name="Taylor T."/>
            <person name="Teague B."/>
            <person name="Thomas K."/>
            <person name="Thorpe A."/>
            <person name="Timms K."/>
            <person name="Tracey A."/>
            <person name="Trevanion S."/>
            <person name="Tromans A.C."/>
            <person name="d'Urso M."/>
            <person name="Verduzco D."/>
            <person name="Villasana D."/>
            <person name="Waldron L."/>
            <person name="Wall M."/>
            <person name="Wang Q."/>
            <person name="Warren J."/>
            <person name="Warry G.L."/>
            <person name="Wei X."/>
            <person name="West A."/>
            <person name="Whitehead S.L."/>
            <person name="Whiteley M.N."/>
            <person name="Wilkinson J.E."/>
            <person name="Willey D.L."/>
            <person name="Williams G."/>
            <person name="Williams L."/>
            <person name="Williamson A."/>
            <person name="Williamson H."/>
            <person name="Wilming L."/>
            <person name="Woodmansey R.L."/>
            <person name="Wray P.W."/>
            <person name="Yen J."/>
            <person name="Zhang J."/>
            <person name="Zhou J."/>
            <person name="Zoghbi H."/>
            <person name="Zorilla S."/>
            <person name="Buck D."/>
            <person name="Reinhardt R."/>
            <person name="Poustka A."/>
            <person name="Rosenthal A."/>
            <person name="Lehrach H."/>
            <person name="Meindl A."/>
            <person name="Minx P.J."/>
            <person name="Hillier L.W."/>
            <person name="Willard H.F."/>
            <person name="Wilson R.K."/>
            <person name="Waterston R.H."/>
            <person name="Rice C.M."/>
            <person name="Vaudin M."/>
            <person name="Coulson A."/>
            <person name="Nelson D.L."/>
            <person name="Weinstock G."/>
            <person name="Sulston J.E."/>
            <person name="Durbin R.M."/>
            <person name="Hubbard T."/>
            <person name="Gibbs R.A."/>
            <person name="Beck S."/>
            <person name="Rogers J."/>
            <person name="Bentley D.R."/>
        </authorList>
    </citation>
    <scope>NUCLEOTIDE SEQUENCE [LARGE SCALE GENOMIC DNA]</scope>
</reference>
<reference key="3">
    <citation type="journal article" date="2004" name="Nat. Genet.">
        <title>Complete sequencing and characterization of 21,243 full-length human cDNAs.</title>
        <authorList>
            <person name="Ota T."/>
            <person name="Suzuki Y."/>
            <person name="Nishikawa T."/>
            <person name="Otsuki T."/>
            <person name="Sugiyama T."/>
            <person name="Irie R."/>
            <person name="Wakamatsu A."/>
            <person name="Hayashi K."/>
            <person name="Sato H."/>
            <person name="Nagai K."/>
            <person name="Kimura K."/>
            <person name="Makita H."/>
            <person name="Sekine M."/>
            <person name="Obayashi M."/>
            <person name="Nishi T."/>
            <person name="Shibahara T."/>
            <person name="Tanaka T."/>
            <person name="Ishii S."/>
            <person name="Yamamoto J."/>
            <person name="Saito K."/>
            <person name="Kawai Y."/>
            <person name="Isono Y."/>
            <person name="Nakamura Y."/>
            <person name="Nagahari K."/>
            <person name="Murakami K."/>
            <person name="Yasuda T."/>
            <person name="Iwayanagi T."/>
            <person name="Wagatsuma M."/>
            <person name="Shiratori A."/>
            <person name="Sudo H."/>
            <person name="Hosoiri T."/>
            <person name="Kaku Y."/>
            <person name="Kodaira H."/>
            <person name="Kondo H."/>
            <person name="Sugawara M."/>
            <person name="Takahashi M."/>
            <person name="Kanda K."/>
            <person name="Yokoi T."/>
            <person name="Furuya T."/>
            <person name="Kikkawa E."/>
            <person name="Omura Y."/>
            <person name="Abe K."/>
            <person name="Kamihara K."/>
            <person name="Katsuta N."/>
            <person name="Sato K."/>
            <person name="Tanikawa M."/>
            <person name="Yamazaki M."/>
            <person name="Ninomiya K."/>
            <person name="Ishibashi T."/>
            <person name="Yamashita H."/>
            <person name="Murakawa K."/>
            <person name="Fujimori K."/>
            <person name="Tanai H."/>
            <person name="Kimata M."/>
            <person name="Watanabe M."/>
            <person name="Hiraoka S."/>
            <person name="Chiba Y."/>
            <person name="Ishida S."/>
            <person name="Ono Y."/>
            <person name="Takiguchi S."/>
            <person name="Watanabe S."/>
            <person name="Yosida M."/>
            <person name="Hotuta T."/>
            <person name="Kusano J."/>
            <person name="Kanehori K."/>
            <person name="Takahashi-Fujii A."/>
            <person name="Hara H."/>
            <person name="Tanase T.-O."/>
            <person name="Nomura Y."/>
            <person name="Togiya S."/>
            <person name="Komai F."/>
            <person name="Hara R."/>
            <person name="Takeuchi K."/>
            <person name="Arita M."/>
            <person name="Imose N."/>
            <person name="Musashino K."/>
            <person name="Yuuki H."/>
            <person name="Oshima A."/>
            <person name="Sasaki N."/>
            <person name="Aotsuka S."/>
            <person name="Yoshikawa Y."/>
            <person name="Matsunawa H."/>
            <person name="Ichihara T."/>
            <person name="Shiohata N."/>
            <person name="Sano S."/>
            <person name="Moriya S."/>
            <person name="Momiyama H."/>
            <person name="Satoh N."/>
            <person name="Takami S."/>
            <person name="Terashima Y."/>
            <person name="Suzuki O."/>
            <person name="Nakagawa S."/>
            <person name="Senoh A."/>
            <person name="Mizoguchi H."/>
            <person name="Goto Y."/>
            <person name="Shimizu F."/>
            <person name="Wakebe H."/>
            <person name="Hishigaki H."/>
            <person name="Watanabe T."/>
            <person name="Sugiyama A."/>
            <person name="Takemoto M."/>
            <person name="Kawakami B."/>
            <person name="Yamazaki M."/>
            <person name="Watanabe K."/>
            <person name="Kumagai A."/>
            <person name="Itakura S."/>
            <person name="Fukuzumi Y."/>
            <person name="Fujimori Y."/>
            <person name="Komiyama M."/>
            <person name="Tashiro H."/>
            <person name="Tanigami A."/>
            <person name="Fujiwara T."/>
            <person name="Ono T."/>
            <person name="Yamada K."/>
            <person name="Fujii Y."/>
            <person name="Ozaki K."/>
            <person name="Hirao M."/>
            <person name="Ohmori Y."/>
            <person name="Kawabata A."/>
            <person name="Hikiji T."/>
            <person name="Kobatake N."/>
            <person name="Inagaki H."/>
            <person name="Ikema Y."/>
            <person name="Okamoto S."/>
            <person name="Okitani R."/>
            <person name="Kawakami T."/>
            <person name="Noguchi S."/>
            <person name="Itoh T."/>
            <person name="Shigeta K."/>
            <person name="Senba T."/>
            <person name="Matsumura K."/>
            <person name="Nakajima Y."/>
            <person name="Mizuno T."/>
            <person name="Morinaga M."/>
            <person name="Sasaki M."/>
            <person name="Togashi T."/>
            <person name="Oyama M."/>
            <person name="Hata H."/>
            <person name="Watanabe M."/>
            <person name="Komatsu T."/>
            <person name="Mizushima-Sugano J."/>
            <person name="Satoh T."/>
            <person name="Shirai Y."/>
            <person name="Takahashi Y."/>
            <person name="Nakagawa K."/>
            <person name="Okumura K."/>
            <person name="Nagase T."/>
            <person name="Nomura N."/>
            <person name="Kikuchi H."/>
            <person name="Masuho Y."/>
            <person name="Yamashita R."/>
            <person name="Nakai K."/>
            <person name="Yada T."/>
            <person name="Nakamura Y."/>
            <person name="Ohara O."/>
            <person name="Isogai T."/>
            <person name="Sugano S."/>
        </authorList>
    </citation>
    <scope>NUCLEOTIDE SEQUENCE [LARGE SCALE MRNA] OF 305-1132 (ISOFORM 4)</scope>
    <scope>NUCLEOTIDE SEQUENCE [LARGE SCALE MRNA] OF 543-1132 (ISOFORM 1)</scope>
    <scope>NUCLEOTIDE SEQUENCE [LARGE SCALE MRNA] OF 777-1132 (ISOFORM 2)</scope>
    <source>
        <tissue>Brain</tissue>
        <tissue>Fetal brain</tissue>
        <tissue>Testis</tissue>
        <tissue>Thalamus</tissue>
    </source>
</reference>
<reference key="4">
    <citation type="journal article" date="2007" name="Science">
        <title>ATM and ATR substrate analysis reveals extensive protein networks responsive to DNA damage.</title>
        <authorList>
            <person name="Matsuoka S."/>
            <person name="Ballif B.A."/>
            <person name="Smogorzewska A."/>
            <person name="McDonald E.R. III"/>
            <person name="Hurov K.E."/>
            <person name="Luo J."/>
            <person name="Bakalarski C.E."/>
            <person name="Zhao Z."/>
            <person name="Solimini N."/>
            <person name="Lerenthal Y."/>
            <person name="Shiloh Y."/>
            <person name="Gygi S.P."/>
            <person name="Elledge S.J."/>
        </authorList>
    </citation>
    <scope>IDENTIFICATION BY MASS SPECTROMETRY [LARGE SCALE ANALYSIS]</scope>
    <source>
        <tissue>Embryonic kidney</tissue>
    </source>
</reference>
<reference key="5">
    <citation type="journal article" date="2008" name="Proc. Natl. Acad. Sci. U.S.A.">
        <title>A quantitative atlas of mitotic phosphorylation.</title>
        <authorList>
            <person name="Dephoure N."/>
            <person name="Zhou C."/>
            <person name="Villen J."/>
            <person name="Beausoleil S.A."/>
            <person name="Bakalarski C.E."/>
            <person name="Elledge S.J."/>
            <person name="Gygi S.P."/>
        </authorList>
    </citation>
    <scope>PHOSPHORYLATION [LARGE SCALE ANALYSIS] AT SER-445</scope>
    <scope>IDENTIFICATION BY MASS SPECTROMETRY [LARGE SCALE ANALYSIS]</scope>
    <source>
        <tissue>Cervix carcinoma</tissue>
    </source>
</reference>
<reference key="6">
    <citation type="journal article" date="2009" name="Anal. Chem.">
        <title>Lys-N and trypsin cover complementary parts of the phosphoproteome in a refined SCX-based approach.</title>
        <authorList>
            <person name="Gauci S."/>
            <person name="Helbig A.O."/>
            <person name="Slijper M."/>
            <person name="Krijgsveld J."/>
            <person name="Heck A.J."/>
            <person name="Mohammed S."/>
        </authorList>
    </citation>
    <scope>IDENTIFICATION BY MASS SPECTROMETRY [LARGE SCALE ANALYSIS]</scope>
</reference>
<reference key="7">
    <citation type="journal article" date="2009" name="Sci. Signal.">
        <title>Quantitative phosphoproteomic analysis of T cell receptor signaling reveals system-wide modulation of protein-protein interactions.</title>
        <authorList>
            <person name="Mayya V."/>
            <person name="Lundgren D.H."/>
            <person name="Hwang S.-I."/>
            <person name="Rezaul K."/>
            <person name="Wu L."/>
            <person name="Eng J.K."/>
            <person name="Rodionov V."/>
            <person name="Han D.K."/>
        </authorList>
    </citation>
    <scope>IDENTIFICATION BY MASS SPECTROMETRY [LARGE SCALE ANALYSIS]</scope>
    <source>
        <tissue>Leukemic T-cell</tissue>
    </source>
</reference>
<reference key="8">
    <citation type="journal article" date="2010" name="Sci. Signal.">
        <title>Quantitative phosphoproteomics reveals widespread full phosphorylation site occupancy during mitosis.</title>
        <authorList>
            <person name="Olsen J.V."/>
            <person name="Vermeulen M."/>
            <person name="Santamaria A."/>
            <person name="Kumar C."/>
            <person name="Miller M.L."/>
            <person name="Jensen L.J."/>
            <person name="Gnad F."/>
            <person name="Cox J."/>
            <person name="Jensen T.S."/>
            <person name="Nigg E.A."/>
            <person name="Brunak S."/>
            <person name="Mann M."/>
        </authorList>
    </citation>
    <scope>PHOSPHORYLATION [LARGE SCALE ANALYSIS] AT SER-1108</scope>
    <scope>IDENTIFICATION BY MASS SPECTROMETRY [LARGE SCALE ANALYSIS]</scope>
    <source>
        <tissue>Cervix carcinoma</tissue>
    </source>
</reference>
<reference key="9">
    <citation type="journal article" date="2011" name="J. Biol. Chem.">
        <title>ATP9B, a P4-ATPase (a putative aminophospholipid translocase), localizes to the trans-Golgi network in a CDC50 protein-independent manner.</title>
        <authorList>
            <person name="Takatsu H."/>
            <person name="Baba K."/>
            <person name="Shima T."/>
            <person name="Umino H."/>
            <person name="Kato U."/>
            <person name="Umeda M."/>
            <person name="Nakayama K."/>
            <person name="Shin H.W."/>
        </authorList>
    </citation>
    <scope>INTERACTION WITH TMEM30A</scope>
    <scope>SUBCELLULAR LOCATION</scope>
</reference>
<reference key="10">
    <citation type="journal article" date="2011" name="Sci. Signal.">
        <title>System-wide temporal characterization of the proteome and phosphoproteome of human embryonic stem cell differentiation.</title>
        <authorList>
            <person name="Rigbolt K.T."/>
            <person name="Prokhorova T.A."/>
            <person name="Akimov V."/>
            <person name="Henningsen J."/>
            <person name="Johansen P.T."/>
            <person name="Kratchmarova I."/>
            <person name="Kassem M."/>
            <person name="Mann M."/>
            <person name="Olsen J.V."/>
            <person name="Blagoev B."/>
        </authorList>
    </citation>
    <scope>IDENTIFICATION BY MASS SPECTROMETRY [LARGE SCALE ANALYSIS]</scope>
</reference>
<reference key="11">
    <citation type="journal article" date="2013" name="J. Proteome Res.">
        <title>Toward a comprehensive characterization of a human cancer cell phosphoproteome.</title>
        <authorList>
            <person name="Zhou H."/>
            <person name="Di Palma S."/>
            <person name="Preisinger C."/>
            <person name="Peng M."/>
            <person name="Polat A.N."/>
            <person name="Heck A.J."/>
            <person name="Mohammed S."/>
        </authorList>
    </citation>
    <scope>PHOSPHORYLATION [LARGE SCALE ANALYSIS] AT SER-445; SER-1108; SER-1116 AND SER-1126</scope>
    <scope>IDENTIFICATION BY MASS SPECTROMETRY [LARGE SCALE ANALYSIS]</scope>
    <source>
        <tissue>Cervix carcinoma</tissue>
        <tissue>Erythroleukemia</tissue>
    </source>
</reference>
<reference key="12">
    <citation type="journal article" date="2014" name="J. Proteomics">
        <title>An enzyme assisted RP-RPLC approach for in-depth analysis of human liver phosphoproteome.</title>
        <authorList>
            <person name="Bian Y."/>
            <person name="Song C."/>
            <person name="Cheng K."/>
            <person name="Dong M."/>
            <person name="Wang F."/>
            <person name="Huang J."/>
            <person name="Sun D."/>
            <person name="Wang L."/>
            <person name="Ye M."/>
            <person name="Zou H."/>
        </authorList>
    </citation>
    <scope>IDENTIFICATION BY MASS SPECTROMETRY [LARGE SCALE ANALYSIS]</scope>
    <source>
        <tissue>Liver</tissue>
    </source>
</reference>
<reference key="13">
    <citation type="journal article" date="2006" name="Science">
        <title>The consensus coding sequences of human breast and colorectal cancers.</title>
        <authorList>
            <person name="Sjoeblom T."/>
            <person name="Jones S."/>
            <person name="Wood L.D."/>
            <person name="Parsons D.W."/>
            <person name="Lin J."/>
            <person name="Barber T.D."/>
            <person name="Mandelker D."/>
            <person name="Leary R.J."/>
            <person name="Ptak J."/>
            <person name="Silliman N."/>
            <person name="Szabo S."/>
            <person name="Buckhaults P."/>
            <person name="Farrell C."/>
            <person name="Meeh P."/>
            <person name="Markowitz S.D."/>
            <person name="Willis J."/>
            <person name="Dawson D."/>
            <person name="Willson J.K.V."/>
            <person name="Gazdar A.F."/>
            <person name="Hartigan J."/>
            <person name="Wu L."/>
            <person name="Liu C."/>
            <person name="Parmigiani G."/>
            <person name="Park B.H."/>
            <person name="Bachman K.E."/>
            <person name="Papadopoulos N."/>
            <person name="Vogelstein B."/>
            <person name="Kinzler K.W."/>
            <person name="Velculescu V.E."/>
        </authorList>
    </citation>
    <scope>VARIANTS [LARGE SCALE ANALYSIS] ILE-157 AND PRO-931</scope>
</reference>
<reference key="14">
    <citation type="journal article" date="2014" name="J. Biol. Chem.">
        <title>Phospholipid flippase activities and substrate specificities of human type IV P-type ATPases localized to the plasma membrane.</title>
        <authorList>
            <person name="Takatsu H."/>
            <person name="Tanaka G."/>
            <person name="Segawa K."/>
            <person name="Suzuki J."/>
            <person name="Nagata S."/>
            <person name="Nakayama K."/>
            <person name="Shin H.W."/>
        </authorList>
    </citation>
    <scope>FUNCTION</scope>
    <scope>CATALYTIC ACTIVITY</scope>
    <scope>SUBCELLULAR LOCATION</scope>
    <scope>MUTAGENESIS OF GLU-184 AND ASP-412</scope>
</reference>
<reference key="15">
    <citation type="journal article" date="2014" name="Science">
        <title>Caspase-mediated cleavage of phospholipid flippase for apoptotic phosphatidylserine exposure.</title>
        <authorList>
            <person name="Segawa K."/>
            <person name="Kurata S."/>
            <person name="Yanagihashi Y."/>
            <person name="Brummelkamp T.R."/>
            <person name="Matsuda F."/>
            <person name="Nagata S."/>
        </authorList>
    </citation>
    <scope>FUNCTION</scope>
    <scope>CATALYTIC ACTIVITY</scope>
    <scope>ACTIVITY REGULATION</scope>
    <scope>PROTEOLYTIC CLEAVAGE</scope>
    <scope>MUTAGENESIS OF ASP-442; ASP-448 AND ASP-484</scope>
</reference>
<reference key="16">
    <citation type="journal article" date="2016" name="Haematologica">
        <title>ATP11C is a major flippase in human erythrocytes and its defect causes congenital hemolytic anemia.</title>
        <authorList>
            <person name="Arashiki N."/>
            <person name="Takakuwa Y."/>
            <person name="Mohandas N."/>
            <person name="Hale J."/>
            <person name="Yoshida K."/>
            <person name="Ogura H."/>
            <person name="Utsugisawa T."/>
            <person name="Ohga S."/>
            <person name="Miyano S."/>
            <person name="Ogawa S."/>
            <person name="Kojima S."/>
            <person name="Kanno H."/>
        </authorList>
    </citation>
    <scope>FUNCTION IN PHOSPHATIDYLSERINE FLIPPING</scope>
    <scope>INVOLVEMENT IN HACXL</scope>
    <scope>VARIANT HACXL ASN-418</scope>
    <scope>CHARACTERIZATION OF VARIANT HACXL ASN-418</scope>
</reference>
<reference key="17">
    <citation type="journal article" date="2016" name="J. Biol. Chem.">
        <title>Human Type IV P-type ATPases That Work as Plasma Membrane Phospholipid Flippases and Their Regulation by Caspase and Calcium.</title>
        <authorList>
            <person name="Segawa K."/>
            <person name="Kurata S."/>
            <person name="Nagata S."/>
        </authorList>
    </citation>
    <scope>FUNCTION</scope>
    <scope>CATALYTIC ACTIVITY</scope>
    <scope>ACTIVITY REGULATION</scope>
    <scope>BIOPHYSICOCHEMICAL PROPERTIES</scope>
    <scope>TISSUE SPECIFICITY</scope>
</reference>
<reference key="18">
    <citation type="journal article" date="2017" name="Nat. Commun.">
        <title>Phospholipid flippase ATP11C is endocytosed and downregulated following Ca2+-mediated protein kinase C activation.</title>
        <authorList>
            <person name="Takatsu H."/>
            <person name="Takayama M."/>
            <person name="Naito T."/>
            <person name="Takada N."/>
            <person name="Tsumagari K."/>
            <person name="Ishihama Y."/>
            <person name="Nakayama K."/>
            <person name="Shin H.W."/>
        </authorList>
    </citation>
    <scope>SUBCELLULAR LOCATION</scope>
    <scope>DOMAIN</scope>
    <scope>PHOSPHORYLATION AT SER-1116</scope>
    <scope>MUTAGENESIS OF SER-1116; LEU-1120; LEU-1121; LEU-1122 AND SER-1126</scope>
</reference>
<reference key="19">
    <citation type="journal article" date="2020" name="J. Biol. Chem.">
        <title>Crystal structure of a human plasma membrane phospholipid flippase.</title>
        <authorList>
            <person name="Nakanishi H."/>
            <person name="Irie K."/>
            <person name="Segawa K."/>
            <person name="Hasegawa K."/>
            <person name="Fujiyoshi Y."/>
            <person name="Nagata S."/>
            <person name="Abe K."/>
        </authorList>
    </citation>
    <scope>X-RAY CRYSTALLOGRAPHY (3.90 ANGSTROMS) OF 13-1132 IN COMPLEX WITH TMEM30A AND MAGNESIUM</scope>
    <scope>FUNCTION</scope>
    <scope>CATALYTIC ACTIVITY</scope>
    <scope>MUTAGENESIS OF GLN-66; ARG-69; ASN-72; PHE-75; THR-93; VAL-101; VAL-352; LEU-353; ASN-355; PHE-356; VAL-360; LYS-883; ASN-884 AND ASN-915</scope>
</reference>
<keyword id="KW-0002">3D-structure</keyword>
<keyword id="KW-0025">Alternative splicing</keyword>
<keyword id="KW-0067">ATP-binding</keyword>
<keyword id="KW-1003">Cell membrane</keyword>
<keyword id="KW-0225">Disease variant</keyword>
<keyword id="KW-0256">Endoplasmic reticulum</keyword>
<keyword id="KW-0967">Endosome</keyword>
<keyword id="KW-0360">Hereditary hemolytic anemia</keyword>
<keyword id="KW-0445">Lipid transport</keyword>
<keyword id="KW-0460">Magnesium</keyword>
<keyword id="KW-0472">Membrane</keyword>
<keyword id="KW-0479">Metal-binding</keyword>
<keyword id="KW-0547">Nucleotide-binding</keyword>
<keyword id="KW-0597">Phosphoprotein</keyword>
<keyword id="KW-1267">Proteomics identification</keyword>
<keyword id="KW-1185">Reference proteome</keyword>
<keyword id="KW-1278">Translocase</keyword>
<keyword id="KW-0812">Transmembrane</keyword>
<keyword id="KW-1133">Transmembrane helix</keyword>
<keyword id="KW-0813">Transport</keyword>
<name>AT11C_HUMAN</name>
<dbReference type="EC" id="7.6.2.1" evidence="8 9 13"/>
<dbReference type="EMBL" id="AJ580093">
    <property type="protein sequence ID" value="CAE30472.1"/>
    <property type="molecule type" value="mRNA"/>
</dbReference>
<dbReference type="EMBL" id="AJ580094">
    <property type="protein sequence ID" value="CAE30473.1"/>
    <property type="molecule type" value="mRNA"/>
</dbReference>
<dbReference type="EMBL" id="AL161777">
    <property type="status" value="NOT_ANNOTATED_CDS"/>
    <property type="molecule type" value="Genomic_DNA"/>
</dbReference>
<dbReference type="EMBL" id="AL356785">
    <property type="status" value="NOT_ANNOTATED_CDS"/>
    <property type="molecule type" value="Genomic_DNA"/>
</dbReference>
<dbReference type="EMBL" id="AL590077">
    <property type="status" value="NOT_ANNOTATED_CDS"/>
    <property type="molecule type" value="Genomic_DNA"/>
</dbReference>
<dbReference type="EMBL" id="AK091552">
    <property type="protein sequence ID" value="BAC03692.1"/>
    <property type="status" value="ALT_INIT"/>
    <property type="molecule type" value="mRNA"/>
</dbReference>
<dbReference type="EMBL" id="AK125474">
    <property type="protein sequence ID" value="BAC86172.1"/>
    <property type="status" value="ALT_INIT"/>
    <property type="molecule type" value="mRNA"/>
</dbReference>
<dbReference type="EMBL" id="AK125986">
    <property type="protein sequence ID" value="BAC86377.1"/>
    <property type="status" value="ALT_INIT"/>
    <property type="molecule type" value="mRNA"/>
</dbReference>
<dbReference type="EMBL" id="AK131262">
    <property type="protein sequence ID" value="BAD18440.1"/>
    <property type="status" value="ALT_INIT"/>
    <property type="molecule type" value="mRNA"/>
</dbReference>
<dbReference type="CCDS" id="CCDS14668.1">
    <molecule id="Q8NB49-1"/>
</dbReference>
<dbReference type="CCDS" id="CCDS35410.1">
    <molecule id="Q8NB49-3"/>
</dbReference>
<dbReference type="RefSeq" id="NP_001010986.2">
    <molecule id="Q8NB49-3"/>
    <property type="nucleotide sequence ID" value="NM_001010986.3"/>
</dbReference>
<dbReference type="RefSeq" id="NP_775965.2">
    <molecule id="Q8NB49-1"/>
    <property type="nucleotide sequence ID" value="NM_173694.4"/>
</dbReference>
<dbReference type="PDB" id="6LKN">
    <property type="method" value="X-ray"/>
    <property type="resolution" value="3.90 A"/>
    <property type="chains" value="A/E/I/M=13-1132"/>
</dbReference>
<dbReference type="PDB" id="7BSP">
    <property type="method" value="EM"/>
    <property type="resolution" value="4.00 A"/>
    <property type="chains" value="A=13-1094"/>
</dbReference>
<dbReference type="PDB" id="7BSQ">
    <property type="method" value="EM"/>
    <property type="resolution" value="3.20 A"/>
    <property type="chains" value="A=13-1094"/>
</dbReference>
<dbReference type="PDB" id="7BSS">
    <property type="method" value="EM"/>
    <property type="resolution" value="3.30 A"/>
    <property type="chains" value="A=13-1094"/>
</dbReference>
<dbReference type="PDB" id="7BSU">
    <property type="method" value="EM"/>
    <property type="resolution" value="3.20 A"/>
    <property type="chains" value="A=13-1094"/>
</dbReference>
<dbReference type="PDB" id="7BSV">
    <property type="method" value="EM"/>
    <property type="resolution" value="3.00 A"/>
    <property type="chains" value="A=13-1094"/>
</dbReference>
<dbReference type="PDB" id="7BSW">
    <property type="method" value="EM"/>
    <property type="resolution" value="3.90 A"/>
    <property type="chains" value="A=13-1094"/>
</dbReference>
<dbReference type="PDB" id="7VSG">
    <property type="method" value="EM"/>
    <property type="resolution" value="3.90 A"/>
    <property type="chains" value="A=13-1094"/>
</dbReference>
<dbReference type="PDB" id="7VSH">
    <property type="method" value="EM"/>
    <property type="resolution" value="3.40 A"/>
    <property type="chains" value="A=13-1094"/>
</dbReference>
<dbReference type="PDBsum" id="6LKN"/>
<dbReference type="PDBsum" id="7BSP"/>
<dbReference type="PDBsum" id="7BSQ"/>
<dbReference type="PDBsum" id="7BSS"/>
<dbReference type="PDBsum" id="7BSU"/>
<dbReference type="PDBsum" id="7BSV"/>
<dbReference type="PDBsum" id="7BSW"/>
<dbReference type="PDBsum" id="7VSG"/>
<dbReference type="PDBsum" id="7VSH"/>
<dbReference type="EMDB" id="EMD-30163"/>
<dbReference type="EMDB" id="EMD-30164"/>
<dbReference type="EMDB" id="EMD-30165"/>
<dbReference type="EMDB" id="EMD-30167"/>
<dbReference type="EMDB" id="EMD-30168"/>
<dbReference type="EMDB" id="EMD-30169"/>
<dbReference type="EMDB" id="EMD-32110"/>
<dbReference type="EMDB" id="EMD-32111"/>
<dbReference type="SMR" id="Q8NB49"/>
<dbReference type="BioGRID" id="130370">
    <property type="interactions" value="97"/>
</dbReference>
<dbReference type="ComplexPortal" id="CPX-6312">
    <property type="entry name" value="ATP11C-CDC50A P4-ATPase complex"/>
</dbReference>
<dbReference type="FunCoup" id="Q8NB49">
    <property type="interactions" value="898"/>
</dbReference>
<dbReference type="IntAct" id="Q8NB49">
    <property type="interactions" value="80"/>
</dbReference>
<dbReference type="MINT" id="Q8NB49"/>
<dbReference type="STRING" id="9606.ENSP00000332756"/>
<dbReference type="TCDB" id="3.A.3.8.14">
    <property type="family name" value="the p-type atpase (p-atpase) superfamily"/>
</dbReference>
<dbReference type="iPTMnet" id="Q8NB49"/>
<dbReference type="PhosphoSitePlus" id="Q8NB49"/>
<dbReference type="SwissPalm" id="Q8NB49"/>
<dbReference type="BioMuta" id="ATP11C"/>
<dbReference type="DMDM" id="62512178"/>
<dbReference type="jPOST" id="Q8NB49"/>
<dbReference type="MassIVE" id="Q8NB49"/>
<dbReference type="PaxDb" id="9606-ENSP00000332756"/>
<dbReference type="PeptideAtlas" id="Q8NB49"/>
<dbReference type="ProteomicsDB" id="72731">
    <molecule id="Q8NB49-1"/>
</dbReference>
<dbReference type="ProteomicsDB" id="72732">
    <molecule id="Q8NB49-2"/>
</dbReference>
<dbReference type="ProteomicsDB" id="72733">
    <molecule id="Q8NB49-3"/>
</dbReference>
<dbReference type="ProteomicsDB" id="72734">
    <molecule id="Q8NB49-4"/>
</dbReference>
<dbReference type="Pumba" id="Q8NB49"/>
<dbReference type="Antibodypedia" id="30516">
    <property type="antibodies" value="105 antibodies from 23 providers"/>
</dbReference>
<dbReference type="DNASU" id="286410"/>
<dbReference type="Ensembl" id="ENST00000327569.7">
    <molecule id="Q8NB49-1"/>
    <property type="protein sequence ID" value="ENSP00000332756.3"/>
    <property type="gene ID" value="ENSG00000101974.15"/>
</dbReference>
<dbReference type="Ensembl" id="ENST00000361648.6">
    <molecule id="Q8NB49-3"/>
    <property type="protein sequence ID" value="ENSP00000355165.2"/>
    <property type="gene ID" value="ENSG00000101974.15"/>
</dbReference>
<dbReference type="GeneID" id="286410"/>
<dbReference type="KEGG" id="hsa:286410"/>
<dbReference type="UCSC" id="uc004faz.4">
    <molecule id="Q8NB49-1"/>
    <property type="organism name" value="human"/>
</dbReference>
<dbReference type="AGR" id="HGNC:13554"/>
<dbReference type="CTD" id="286410"/>
<dbReference type="DisGeNET" id="286410"/>
<dbReference type="GeneCards" id="ATP11C"/>
<dbReference type="HGNC" id="HGNC:13554">
    <property type="gene designation" value="ATP11C"/>
</dbReference>
<dbReference type="HPA" id="ENSG00000101974">
    <property type="expression patterns" value="Tissue enhanced (liver)"/>
</dbReference>
<dbReference type="MalaCards" id="ATP11C"/>
<dbReference type="MIM" id="300516">
    <property type="type" value="gene"/>
</dbReference>
<dbReference type="MIM" id="301015">
    <property type="type" value="phenotype"/>
</dbReference>
<dbReference type="neXtProt" id="NX_Q8NB49"/>
<dbReference type="OpenTargets" id="ENSG00000101974"/>
<dbReference type="PharmGKB" id="PA25103"/>
<dbReference type="VEuPathDB" id="HostDB:ENSG00000101974"/>
<dbReference type="eggNOG" id="KOG0206">
    <property type="taxonomic scope" value="Eukaryota"/>
</dbReference>
<dbReference type="GeneTree" id="ENSGT00940000158878"/>
<dbReference type="HOGENOM" id="CLU_000846_3_1_1"/>
<dbReference type="InParanoid" id="Q8NB49"/>
<dbReference type="OMA" id="EYNIAYN"/>
<dbReference type="OrthoDB" id="377733at2759"/>
<dbReference type="PAN-GO" id="Q8NB49">
    <property type="GO annotations" value="6 GO annotations based on evolutionary models"/>
</dbReference>
<dbReference type="PhylomeDB" id="Q8NB49"/>
<dbReference type="TreeFam" id="TF326897"/>
<dbReference type="BRENDA" id="7.6.2.1">
    <property type="organism ID" value="2681"/>
</dbReference>
<dbReference type="PathwayCommons" id="Q8NB49"/>
<dbReference type="Reactome" id="R-HSA-936837">
    <property type="pathway name" value="Ion transport by P-type ATPases"/>
</dbReference>
<dbReference type="SignaLink" id="Q8NB49"/>
<dbReference type="BioGRID-ORCS" id="286410">
    <property type="hits" value="20 hits in 786 CRISPR screens"/>
</dbReference>
<dbReference type="ChiTaRS" id="ATP11C">
    <property type="organism name" value="human"/>
</dbReference>
<dbReference type="GenomeRNAi" id="286410"/>
<dbReference type="Pharos" id="Q8NB49">
    <property type="development level" value="Tbio"/>
</dbReference>
<dbReference type="PRO" id="PR:Q8NB49"/>
<dbReference type="Proteomes" id="UP000005640">
    <property type="component" value="Chromosome X"/>
</dbReference>
<dbReference type="RNAct" id="Q8NB49">
    <property type="molecule type" value="protein"/>
</dbReference>
<dbReference type="Bgee" id="ENSG00000101974">
    <property type="expression patterns" value="Expressed in seminal vesicle and 187 other cell types or tissues"/>
</dbReference>
<dbReference type="ExpressionAtlas" id="Q8NB49">
    <property type="expression patterns" value="baseline and differential"/>
</dbReference>
<dbReference type="GO" id="GO:0031901">
    <property type="term" value="C:early endosome membrane"/>
    <property type="evidence" value="ECO:0007669"/>
    <property type="project" value="UniProtKB-SubCell"/>
</dbReference>
<dbReference type="GO" id="GO:0005783">
    <property type="term" value="C:endoplasmic reticulum"/>
    <property type="evidence" value="ECO:0000314"/>
    <property type="project" value="UniProtKB"/>
</dbReference>
<dbReference type="GO" id="GO:0005789">
    <property type="term" value="C:endoplasmic reticulum membrane"/>
    <property type="evidence" value="ECO:0007669"/>
    <property type="project" value="UniProtKB-SubCell"/>
</dbReference>
<dbReference type="GO" id="GO:0005765">
    <property type="term" value="C:lysosomal membrane"/>
    <property type="evidence" value="ECO:0007005"/>
    <property type="project" value="UniProtKB"/>
</dbReference>
<dbReference type="GO" id="GO:1990531">
    <property type="term" value="C:phospholipid-translocating ATPase complex"/>
    <property type="evidence" value="ECO:0000314"/>
    <property type="project" value="FlyBase"/>
</dbReference>
<dbReference type="GO" id="GO:0005886">
    <property type="term" value="C:plasma membrane"/>
    <property type="evidence" value="ECO:0000314"/>
    <property type="project" value="UniProtKB"/>
</dbReference>
<dbReference type="GO" id="GO:0055037">
    <property type="term" value="C:recycling endosome"/>
    <property type="evidence" value="ECO:0000318"/>
    <property type="project" value="GO_Central"/>
</dbReference>
<dbReference type="GO" id="GO:0055038">
    <property type="term" value="C:recycling endosome membrane"/>
    <property type="evidence" value="ECO:0007669"/>
    <property type="project" value="UniProtKB-SubCell"/>
</dbReference>
<dbReference type="GO" id="GO:0005524">
    <property type="term" value="F:ATP binding"/>
    <property type="evidence" value="ECO:0007669"/>
    <property type="project" value="UniProtKB-KW"/>
</dbReference>
<dbReference type="GO" id="GO:0016887">
    <property type="term" value="F:ATP hydrolysis activity"/>
    <property type="evidence" value="ECO:0007669"/>
    <property type="project" value="InterPro"/>
</dbReference>
<dbReference type="GO" id="GO:0140326">
    <property type="term" value="F:ATPase-coupled intramembrane lipid transporter activity"/>
    <property type="evidence" value="ECO:0000318"/>
    <property type="project" value="GO_Central"/>
</dbReference>
<dbReference type="GO" id="GO:0000287">
    <property type="term" value="F:magnesium ion binding"/>
    <property type="evidence" value="ECO:0007669"/>
    <property type="project" value="InterPro"/>
</dbReference>
<dbReference type="GO" id="GO:0090555">
    <property type="term" value="F:phosphatidylethanolamine flippase activity"/>
    <property type="evidence" value="ECO:0000314"/>
    <property type="project" value="UniProtKB"/>
</dbReference>
<dbReference type="GO" id="GO:0140346">
    <property type="term" value="F:phosphatidylserine flippase activity"/>
    <property type="evidence" value="ECO:0000314"/>
    <property type="project" value="UniProtKB"/>
</dbReference>
<dbReference type="GO" id="GO:0090556">
    <property type="term" value="F:phosphatidylserine floppase activity"/>
    <property type="evidence" value="ECO:0007669"/>
    <property type="project" value="RHEA"/>
</dbReference>
<dbReference type="GO" id="GO:0034220">
    <property type="term" value="P:monoatomic ion transmembrane transport"/>
    <property type="evidence" value="ECO:0000304"/>
    <property type="project" value="Reactome"/>
</dbReference>
<dbReference type="GO" id="GO:0045332">
    <property type="term" value="P:phospholipid translocation"/>
    <property type="evidence" value="ECO:0000314"/>
    <property type="project" value="FlyBase"/>
</dbReference>
<dbReference type="CDD" id="cd02073">
    <property type="entry name" value="P-type_ATPase_APLT_Dnf-like"/>
    <property type="match status" value="1"/>
</dbReference>
<dbReference type="FunFam" id="2.70.150.10:FF:000009">
    <property type="entry name" value="Phospholipid-transporting ATPase"/>
    <property type="match status" value="1"/>
</dbReference>
<dbReference type="FunFam" id="3.40.1110.10:FF:000017">
    <property type="entry name" value="Phospholipid-transporting ATPase"/>
    <property type="match status" value="1"/>
</dbReference>
<dbReference type="FunFam" id="3.40.50.1000:FF:000012">
    <property type="entry name" value="Phospholipid-transporting ATPase"/>
    <property type="match status" value="1"/>
</dbReference>
<dbReference type="Gene3D" id="3.40.1110.10">
    <property type="entry name" value="Calcium-transporting ATPase, cytoplasmic domain N"/>
    <property type="match status" value="1"/>
</dbReference>
<dbReference type="Gene3D" id="2.70.150.10">
    <property type="entry name" value="Calcium-transporting ATPase, cytoplasmic transduction domain A"/>
    <property type="match status" value="1"/>
</dbReference>
<dbReference type="Gene3D" id="3.40.50.1000">
    <property type="entry name" value="HAD superfamily/HAD-like"/>
    <property type="match status" value="1"/>
</dbReference>
<dbReference type="InterPro" id="IPR023299">
    <property type="entry name" value="ATPase_P-typ_cyto_dom_N"/>
</dbReference>
<dbReference type="InterPro" id="IPR018303">
    <property type="entry name" value="ATPase_P-typ_P_site"/>
</dbReference>
<dbReference type="InterPro" id="IPR023298">
    <property type="entry name" value="ATPase_P-typ_TM_dom_sf"/>
</dbReference>
<dbReference type="InterPro" id="IPR008250">
    <property type="entry name" value="ATPase_P-typ_transduc_dom_A_sf"/>
</dbReference>
<dbReference type="InterPro" id="IPR036412">
    <property type="entry name" value="HAD-like_sf"/>
</dbReference>
<dbReference type="InterPro" id="IPR023214">
    <property type="entry name" value="HAD_sf"/>
</dbReference>
<dbReference type="InterPro" id="IPR006539">
    <property type="entry name" value="P-type_ATPase_IV"/>
</dbReference>
<dbReference type="InterPro" id="IPR032631">
    <property type="entry name" value="P-type_ATPase_N"/>
</dbReference>
<dbReference type="InterPro" id="IPR001757">
    <property type="entry name" value="P_typ_ATPase"/>
</dbReference>
<dbReference type="InterPro" id="IPR032630">
    <property type="entry name" value="P_typ_ATPase_c"/>
</dbReference>
<dbReference type="InterPro" id="IPR044492">
    <property type="entry name" value="P_typ_ATPase_HD_dom"/>
</dbReference>
<dbReference type="NCBIfam" id="TIGR01652">
    <property type="entry name" value="ATPase-Plipid"/>
    <property type="match status" value="1"/>
</dbReference>
<dbReference type="NCBIfam" id="TIGR01494">
    <property type="entry name" value="ATPase_P-type"/>
    <property type="match status" value="3"/>
</dbReference>
<dbReference type="PANTHER" id="PTHR24092:SF38">
    <property type="entry name" value="PHOSPHOLIPID-TRANSPORTING ATPASE IG"/>
    <property type="match status" value="1"/>
</dbReference>
<dbReference type="PANTHER" id="PTHR24092">
    <property type="entry name" value="PROBABLE PHOSPHOLIPID-TRANSPORTING ATPASE"/>
    <property type="match status" value="1"/>
</dbReference>
<dbReference type="Pfam" id="PF13246">
    <property type="entry name" value="Cation_ATPase"/>
    <property type="match status" value="1"/>
</dbReference>
<dbReference type="Pfam" id="PF00122">
    <property type="entry name" value="E1-E2_ATPase"/>
    <property type="match status" value="1"/>
</dbReference>
<dbReference type="Pfam" id="PF16212">
    <property type="entry name" value="PhoLip_ATPase_C"/>
    <property type="match status" value="1"/>
</dbReference>
<dbReference type="Pfam" id="PF16209">
    <property type="entry name" value="PhoLip_ATPase_N"/>
    <property type="match status" value="1"/>
</dbReference>
<dbReference type="SFLD" id="SFLDS00003">
    <property type="entry name" value="Haloacid_Dehalogenase"/>
    <property type="match status" value="1"/>
</dbReference>
<dbReference type="SFLD" id="SFLDF00027">
    <property type="entry name" value="p-type_atpase"/>
    <property type="match status" value="1"/>
</dbReference>
<dbReference type="SUPFAM" id="SSF81653">
    <property type="entry name" value="Calcium ATPase, transduction domain A"/>
    <property type="match status" value="1"/>
</dbReference>
<dbReference type="SUPFAM" id="SSF81665">
    <property type="entry name" value="Calcium ATPase, transmembrane domain M"/>
    <property type="match status" value="1"/>
</dbReference>
<dbReference type="SUPFAM" id="SSF56784">
    <property type="entry name" value="HAD-like"/>
    <property type="match status" value="1"/>
</dbReference>
<dbReference type="SUPFAM" id="SSF81660">
    <property type="entry name" value="Metal cation-transporting ATPase, ATP-binding domain N"/>
    <property type="match status" value="1"/>
</dbReference>
<dbReference type="PROSITE" id="PS00154">
    <property type="entry name" value="ATPASE_E1_E2"/>
    <property type="match status" value="1"/>
</dbReference>
<sequence>MQMVPSLPPASECAGEEKRVGTRTVFVGNHPVSETEAYIAQRFCDNRIVSSKYTLWNFLPKNLFEQFRRIANFYFLIIFLVQVTVDTPTSPVTSGLPLFFVITVTAIKQGYEDCLRHRADNEVNKSTVYIIENAKRVRKESEKIKVGDVVEVQADETFPCDLILLSSCTTDGTCYVTTASLDGESNCKTHYAVRDTIALCTAESIDTLRAAIECEQPQPDLYKFVGRINIYSNSLEAVARSLGPENLLLKGATLKNTEKIYGVAVYTGMETKMALNYQGKSQKRSAVEKSINAFLIVYLFILLTKAAVCTTLKYVWQSTPYNDEPWYNQKTQKERETLKVLKMFTDFLSFMVLFNFIIPVSMYVTVEMQKFLGSFFISWDKDFYDEEINEGALVNTSDLNEELGQVDYVFTDKTGTLTENSMEFIECCIDGHKYKGVTQEVDGLSQTDGTLTYFDKVDKNREELFLRALCLCHTVEIKTNDAVDGATESAELTYISSSPDEIALVKGAKRYGFTFLGNRNGYMRVENQRKEIEEYELLHTLNFDAVRRRMSVIVKTQEGDILLFCKGADSAVFPRVQNHEIELTKVHVERNAMDGYRTLCVAFKEIAPDDYERINRQLIEAKMALQDREEKMEKVFDDIETNMNLIGATAVEDKLQDQAAETIEALHAAGLKVWVLTGDKMETAKSTCYACRLFQTNTELLELTTKTIEESERKEDRLHELLIEYRKKLLHEFPKSTRSFKKAWTEHQEYGLIIDGSTLSLILNSSQDSSSNNYKSIFLQICMKCTAVLCCRMAPLQKAQIVRMVKNLKGSPITLSIGDGANDVSMILESHVGIGIKGKEGRQAARNSDYSVPKFKHLKKLLLAHGHLYYVRIAHLVQYFFYKNLCFILPQFLYQFFCGFSQQPLYDAAYLTMYNICFTSLPILAYSLLEQHINIDTLTSDPRLYMKISGNAMLQLGPFLYWTFLAAFEGTVFFFGTYFLFQTASLEENGKVYGNWTFGTIVFTVLVFTVTLKLALDTRFWTWINHFVIWGSLAFYVFFSFFWGGIIWPFLKQQRMYFVFAQMLSSVSTWLAIILLIFISLFPEILLIVLKNVRRRSARRNLSCRRASDSLSARPSVRPLLLRTFSDESNVL</sequence>
<gene>
    <name evidence="16" type="primary">ATP11C</name>
    <name type="synonym">ATPIG</name>
    <name type="synonym">ATPIQ</name>
</gene>